<name>Y632_PARUW</name>
<dbReference type="EMBL" id="BX908798">
    <property type="protein sequence ID" value="CAF23356.1"/>
    <property type="molecule type" value="Genomic_DNA"/>
</dbReference>
<dbReference type="RefSeq" id="WP_011175182.1">
    <property type="nucleotide sequence ID" value="NC_005861.2"/>
</dbReference>
<dbReference type="SMR" id="Q6MDJ3"/>
<dbReference type="STRING" id="264201.pc0632"/>
<dbReference type="KEGG" id="pcu:PC_RS03025"/>
<dbReference type="eggNOG" id="COG3237">
    <property type="taxonomic scope" value="Bacteria"/>
</dbReference>
<dbReference type="HOGENOM" id="CLU_135567_4_1_0"/>
<dbReference type="OrthoDB" id="9796058at2"/>
<dbReference type="Proteomes" id="UP000000529">
    <property type="component" value="Chromosome"/>
</dbReference>
<dbReference type="Gene3D" id="1.10.1470.10">
    <property type="entry name" value="YjbJ"/>
    <property type="match status" value="1"/>
</dbReference>
<dbReference type="InterPro" id="IPR008462">
    <property type="entry name" value="CsbD"/>
</dbReference>
<dbReference type="InterPro" id="IPR050423">
    <property type="entry name" value="UPF0337_stress_rsp"/>
</dbReference>
<dbReference type="InterPro" id="IPR026042">
    <property type="entry name" value="YjbJ"/>
</dbReference>
<dbReference type="InterPro" id="IPR036629">
    <property type="entry name" value="YjbJ_sf"/>
</dbReference>
<dbReference type="PANTHER" id="PTHR34977">
    <property type="entry name" value="UPF0337 PROTEIN YJBJ"/>
    <property type="match status" value="1"/>
</dbReference>
<dbReference type="PANTHER" id="PTHR34977:SF1">
    <property type="entry name" value="UPF0337 PROTEIN YJBJ"/>
    <property type="match status" value="1"/>
</dbReference>
<dbReference type="Pfam" id="PF05532">
    <property type="entry name" value="CsbD"/>
    <property type="match status" value="1"/>
</dbReference>
<dbReference type="PIRSF" id="PIRSF039008">
    <property type="entry name" value="YjbJ"/>
    <property type="match status" value="1"/>
</dbReference>
<dbReference type="SUPFAM" id="SSF69047">
    <property type="entry name" value="Hypothetical protein YjbJ"/>
    <property type="match status" value="1"/>
</dbReference>
<sequence>MNKDQIEGEWKNIKGIVKEKWGKLTDNDLTEINGQREQMLGKLQSLYGYSKEQAEKEWKDFQDKHR</sequence>
<proteinExistence type="inferred from homology"/>
<gene>
    <name type="ordered locus">pc0632</name>
</gene>
<feature type="chain" id="PRO_0000210014" description="UPF0337 protein pc0632">
    <location>
        <begin position="1"/>
        <end position="66"/>
    </location>
</feature>
<protein>
    <recommendedName>
        <fullName>UPF0337 protein pc0632</fullName>
    </recommendedName>
</protein>
<comment type="similarity">
    <text evidence="1">Belongs to the UPF0337 (CsbD) family.</text>
</comment>
<evidence type="ECO:0000305" key="1"/>
<keyword id="KW-1185">Reference proteome</keyword>
<accession>Q6MDJ3</accession>
<organism>
    <name type="scientific">Protochlamydia amoebophila (strain UWE25)</name>
    <dbReference type="NCBI Taxonomy" id="264201"/>
    <lineage>
        <taxon>Bacteria</taxon>
        <taxon>Pseudomonadati</taxon>
        <taxon>Chlamydiota</taxon>
        <taxon>Chlamydiia</taxon>
        <taxon>Parachlamydiales</taxon>
        <taxon>Parachlamydiaceae</taxon>
        <taxon>Candidatus Protochlamydia</taxon>
    </lineage>
</organism>
<reference key="1">
    <citation type="journal article" date="2004" name="Science">
        <title>Illuminating the evolutionary history of chlamydiae.</title>
        <authorList>
            <person name="Horn M."/>
            <person name="Collingro A."/>
            <person name="Schmitz-Esser S."/>
            <person name="Beier C.L."/>
            <person name="Purkhold U."/>
            <person name="Fartmann B."/>
            <person name="Brandt P."/>
            <person name="Nyakatura G.J."/>
            <person name="Droege M."/>
            <person name="Frishman D."/>
            <person name="Rattei T."/>
            <person name="Mewes H.-W."/>
            <person name="Wagner M."/>
        </authorList>
    </citation>
    <scope>NUCLEOTIDE SEQUENCE [LARGE SCALE GENOMIC DNA]</scope>
    <source>
        <strain>UWE25</strain>
    </source>
</reference>